<dbReference type="EC" id="6.3.3.1" evidence="1"/>
<dbReference type="EMBL" id="CP000438">
    <property type="protein sequence ID" value="ABJ10105.1"/>
    <property type="molecule type" value="Genomic_DNA"/>
</dbReference>
<dbReference type="RefSeq" id="WP_003109942.1">
    <property type="nucleotide sequence ID" value="NZ_CP034244.1"/>
</dbReference>
<dbReference type="SMR" id="Q02IA6"/>
<dbReference type="KEGG" id="pau:PA14_52040"/>
<dbReference type="PseudoCAP" id="PA14_52040"/>
<dbReference type="HOGENOM" id="CLU_047116_0_0_6"/>
<dbReference type="BioCyc" id="PAER208963:G1G74-4379-MONOMER"/>
<dbReference type="UniPathway" id="UPA00074">
    <property type="reaction ID" value="UER00129"/>
</dbReference>
<dbReference type="Proteomes" id="UP000000653">
    <property type="component" value="Chromosome"/>
</dbReference>
<dbReference type="GO" id="GO:0005829">
    <property type="term" value="C:cytosol"/>
    <property type="evidence" value="ECO:0007669"/>
    <property type="project" value="TreeGrafter"/>
</dbReference>
<dbReference type="GO" id="GO:0005524">
    <property type="term" value="F:ATP binding"/>
    <property type="evidence" value="ECO:0007669"/>
    <property type="project" value="UniProtKB-KW"/>
</dbReference>
<dbReference type="GO" id="GO:0004637">
    <property type="term" value="F:phosphoribosylamine-glycine ligase activity"/>
    <property type="evidence" value="ECO:0007669"/>
    <property type="project" value="TreeGrafter"/>
</dbReference>
<dbReference type="GO" id="GO:0004641">
    <property type="term" value="F:phosphoribosylformylglycinamidine cyclo-ligase activity"/>
    <property type="evidence" value="ECO:0007669"/>
    <property type="project" value="UniProtKB-UniRule"/>
</dbReference>
<dbReference type="GO" id="GO:0006189">
    <property type="term" value="P:'de novo' IMP biosynthetic process"/>
    <property type="evidence" value="ECO:0007669"/>
    <property type="project" value="UniProtKB-UniRule"/>
</dbReference>
<dbReference type="GO" id="GO:0046084">
    <property type="term" value="P:adenine biosynthetic process"/>
    <property type="evidence" value="ECO:0007669"/>
    <property type="project" value="TreeGrafter"/>
</dbReference>
<dbReference type="CDD" id="cd02196">
    <property type="entry name" value="PurM"/>
    <property type="match status" value="1"/>
</dbReference>
<dbReference type="FunFam" id="3.30.1330.10:FF:000001">
    <property type="entry name" value="Phosphoribosylformylglycinamidine cyclo-ligase"/>
    <property type="match status" value="1"/>
</dbReference>
<dbReference type="FunFam" id="3.90.650.10:FF:000001">
    <property type="entry name" value="Phosphoribosylformylglycinamidine cyclo-ligase"/>
    <property type="match status" value="1"/>
</dbReference>
<dbReference type="Gene3D" id="3.90.650.10">
    <property type="entry name" value="PurM-like C-terminal domain"/>
    <property type="match status" value="1"/>
</dbReference>
<dbReference type="Gene3D" id="3.30.1330.10">
    <property type="entry name" value="PurM-like, N-terminal domain"/>
    <property type="match status" value="1"/>
</dbReference>
<dbReference type="HAMAP" id="MF_00741">
    <property type="entry name" value="AIRS"/>
    <property type="match status" value="1"/>
</dbReference>
<dbReference type="InterPro" id="IPR010918">
    <property type="entry name" value="PurM-like_C_dom"/>
</dbReference>
<dbReference type="InterPro" id="IPR036676">
    <property type="entry name" value="PurM-like_C_sf"/>
</dbReference>
<dbReference type="InterPro" id="IPR016188">
    <property type="entry name" value="PurM-like_N"/>
</dbReference>
<dbReference type="InterPro" id="IPR036921">
    <property type="entry name" value="PurM-like_N_sf"/>
</dbReference>
<dbReference type="InterPro" id="IPR004733">
    <property type="entry name" value="PurM_cligase"/>
</dbReference>
<dbReference type="NCBIfam" id="TIGR00878">
    <property type="entry name" value="purM"/>
    <property type="match status" value="1"/>
</dbReference>
<dbReference type="PANTHER" id="PTHR10520:SF12">
    <property type="entry name" value="TRIFUNCTIONAL PURINE BIOSYNTHETIC PROTEIN ADENOSINE-3"/>
    <property type="match status" value="1"/>
</dbReference>
<dbReference type="PANTHER" id="PTHR10520">
    <property type="entry name" value="TRIFUNCTIONAL PURINE BIOSYNTHETIC PROTEIN ADENOSINE-3-RELATED"/>
    <property type="match status" value="1"/>
</dbReference>
<dbReference type="Pfam" id="PF00586">
    <property type="entry name" value="AIRS"/>
    <property type="match status" value="1"/>
</dbReference>
<dbReference type="Pfam" id="PF02769">
    <property type="entry name" value="AIRS_C"/>
    <property type="match status" value="1"/>
</dbReference>
<dbReference type="SUPFAM" id="SSF56042">
    <property type="entry name" value="PurM C-terminal domain-like"/>
    <property type="match status" value="1"/>
</dbReference>
<dbReference type="SUPFAM" id="SSF55326">
    <property type="entry name" value="PurM N-terminal domain-like"/>
    <property type="match status" value="1"/>
</dbReference>
<keyword id="KW-0067">ATP-binding</keyword>
<keyword id="KW-0963">Cytoplasm</keyword>
<keyword id="KW-0436">Ligase</keyword>
<keyword id="KW-0547">Nucleotide-binding</keyword>
<keyword id="KW-0658">Purine biosynthesis</keyword>
<gene>
    <name evidence="1" type="primary">purM</name>
    <name type="ordered locus">PA14_52040</name>
</gene>
<protein>
    <recommendedName>
        <fullName evidence="1">Phosphoribosylformylglycinamidine cyclo-ligase</fullName>
        <ecNumber evidence="1">6.3.3.1</ecNumber>
    </recommendedName>
    <alternativeName>
        <fullName evidence="1">AIR synthase</fullName>
    </alternativeName>
    <alternativeName>
        <fullName evidence="1">AIRS</fullName>
    </alternativeName>
    <alternativeName>
        <fullName evidence="1">Phosphoribosyl-aminoimidazole synthetase</fullName>
    </alternativeName>
</protein>
<feature type="chain" id="PRO_1000046458" description="Phosphoribosylformylglycinamidine cyclo-ligase">
    <location>
        <begin position="1"/>
        <end position="353"/>
    </location>
</feature>
<proteinExistence type="inferred from homology"/>
<accession>Q02IA6</accession>
<organism>
    <name type="scientific">Pseudomonas aeruginosa (strain UCBPP-PA14)</name>
    <dbReference type="NCBI Taxonomy" id="208963"/>
    <lineage>
        <taxon>Bacteria</taxon>
        <taxon>Pseudomonadati</taxon>
        <taxon>Pseudomonadota</taxon>
        <taxon>Gammaproteobacteria</taxon>
        <taxon>Pseudomonadales</taxon>
        <taxon>Pseudomonadaceae</taxon>
        <taxon>Pseudomonas</taxon>
    </lineage>
</organism>
<reference key="1">
    <citation type="journal article" date="2006" name="Genome Biol.">
        <title>Genomic analysis reveals that Pseudomonas aeruginosa virulence is combinatorial.</title>
        <authorList>
            <person name="Lee D.G."/>
            <person name="Urbach J.M."/>
            <person name="Wu G."/>
            <person name="Liberati N.T."/>
            <person name="Feinbaum R.L."/>
            <person name="Miyata S."/>
            <person name="Diggins L.T."/>
            <person name="He J."/>
            <person name="Saucier M."/>
            <person name="Deziel E."/>
            <person name="Friedman L."/>
            <person name="Li L."/>
            <person name="Grills G."/>
            <person name="Montgomery K."/>
            <person name="Kucherlapati R."/>
            <person name="Rahme L.G."/>
            <person name="Ausubel F.M."/>
        </authorList>
    </citation>
    <scope>NUCLEOTIDE SEQUENCE [LARGE SCALE GENOMIC DNA]</scope>
    <source>
        <strain>UCBPP-PA14</strain>
    </source>
</reference>
<sequence>MSSKQPSLSYKDAGVDIDAGEALVERIKGVAKRTARPEVMGGLGGFGALCEIPAGYKQPVLVSGTDGVGTKLRLALNLNKHDSIGQDLVAMCVNDLVVCGAEPLFFLDYYATGKLNVDVAATVVTGIGAGCELAGCSLVGGETAEMPGMYEGEDYDLAGFCVGVVEKAEIIDGSRVQAGDALIALPSSGPHSNGYSLIRKIIEVSGADIEQVQLDGKPLADLLMAPTRIYVKPLLQLIKQTGAVKAMAHITGGGLLDNIPRVLPDNAQAVIDVASWNRPAVFDWLQEQGNVDETEMHRVLNCGVGMVICVAQSDAEKALEVLRAAGEQPWQIGRIETCGADAERVVLNNLKNH</sequence>
<evidence type="ECO:0000255" key="1">
    <source>
        <dbReference type="HAMAP-Rule" id="MF_00741"/>
    </source>
</evidence>
<comment type="catalytic activity">
    <reaction evidence="1">
        <text>2-formamido-N(1)-(5-O-phospho-beta-D-ribosyl)acetamidine + ATP = 5-amino-1-(5-phospho-beta-D-ribosyl)imidazole + ADP + phosphate + H(+)</text>
        <dbReference type="Rhea" id="RHEA:23032"/>
        <dbReference type="ChEBI" id="CHEBI:15378"/>
        <dbReference type="ChEBI" id="CHEBI:30616"/>
        <dbReference type="ChEBI" id="CHEBI:43474"/>
        <dbReference type="ChEBI" id="CHEBI:137981"/>
        <dbReference type="ChEBI" id="CHEBI:147287"/>
        <dbReference type="ChEBI" id="CHEBI:456216"/>
        <dbReference type="EC" id="6.3.3.1"/>
    </reaction>
</comment>
<comment type="pathway">
    <text evidence="1">Purine metabolism; IMP biosynthesis via de novo pathway; 5-amino-1-(5-phospho-D-ribosyl)imidazole from N(2)-formyl-N(1)-(5-phospho-D-ribosyl)glycinamide: step 2/2.</text>
</comment>
<comment type="subcellular location">
    <subcellularLocation>
        <location evidence="1">Cytoplasm</location>
    </subcellularLocation>
</comment>
<comment type="similarity">
    <text evidence="1">Belongs to the AIR synthase family.</text>
</comment>
<name>PUR5_PSEAB</name>